<evidence type="ECO:0000255" key="1">
    <source>
        <dbReference type="HAMAP-Rule" id="MF_00041"/>
    </source>
</evidence>
<accession>Q2GKF4</accession>
<protein>
    <recommendedName>
        <fullName evidence="1">Cysteine--tRNA ligase</fullName>
        <ecNumber evidence="1">6.1.1.16</ecNumber>
    </recommendedName>
    <alternativeName>
        <fullName evidence="1">Cysteinyl-tRNA synthetase</fullName>
        <shortName evidence="1">CysRS</shortName>
    </alternativeName>
</protein>
<keyword id="KW-0030">Aminoacyl-tRNA synthetase</keyword>
<keyword id="KW-0067">ATP-binding</keyword>
<keyword id="KW-0963">Cytoplasm</keyword>
<keyword id="KW-0436">Ligase</keyword>
<keyword id="KW-0479">Metal-binding</keyword>
<keyword id="KW-0547">Nucleotide-binding</keyword>
<keyword id="KW-0648">Protein biosynthesis</keyword>
<keyword id="KW-0862">Zinc</keyword>
<comment type="catalytic activity">
    <reaction evidence="1">
        <text>tRNA(Cys) + L-cysteine + ATP = L-cysteinyl-tRNA(Cys) + AMP + diphosphate</text>
        <dbReference type="Rhea" id="RHEA:17773"/>
        <dbReference type="Rhea" id="RHEA-COMP:9661"/>
        <dbReference type="Rhea" id="RHEA-COMP:9679"/>
        <dbReference type="ChEBI" id="CHEBI:30616"/>
        <dbReference type="ChEBI" id="CHEBI:33019"/>
        <dbReference type="ChEBI" id="CHEBI:35235"/>
        <dbReference type="ChEBI" id="CHEBI:78442"/>
        <dbReference type="ChEBI" id="CHEBI:78517"/>
        <dbReference type="ChEBI" id="CHEBI:456215"/>
        <dbReference type="EC" id="6.1.1.16"/>
    </reaction>
</comment>
<comment type="cofactor">
    <cofactor evidence="1">
        <name>Zn(2+)</name>
        <dbReference type="ChEBI" id="CHEBI:29105"/>
    </cofactor>
    <text evidence="1">Binds 1 zinc ion per subunit.</text>
</comment>
<comment type="subunit">
    <text evidence="1">Monomer.</text>
</comment>
<comment type="subcellular location">
    <subcellularLocation>
        <location evidence="1">Cytoplasm</location>
    </subcellularLocation>
</comment>
<comment type="similarity">
    <text evidence="1">Belongs to the class-I aminoacyl-tRNA synthetase family.</text>
</comment>
<proteinExistence type="inferred from homology"/>
<dbReference type="EC" id="6.1.1.16" evidence="1"/>
<dbReference type="EMBL" id="CP000235">
    <property type="protein sequence ID" value="ABD43506.1"/>
    <property type="molecule type" value="Genomic_DNA"/>
</dbReference>
<dbReference type="RefSeq" id="WP_011450668.1">
    <property type="nucleotide sequence ID" value="NC_007797.1"/>
</dbReference>
<dbReference type="SMR" id="Q2GKF4"/>
<dbReference type="STRING" id="212042.APH_0555"/>
<dbReference type="PaxDb" id="212042-APH_0555"/>
<dbReference type="EnsemblBacteria" id="ABD43506">
    <property type="protein sequence ID" value="ABD43506"/>
    <property type="gene ID" value="APH_0555"/>
</dbReference>
<dbReference type="GeneID" id="92748321"/>
<dbReference type="KEGG" id="aph:APH_0555"/>
<dbReference type="eggNOG" id="COG0215">
    <property type="taxonomic scope" value="Bacteria"/>
</dbReference>
<dbReference type="HOGENOM" id="CLU_013528_0_1_5"/>
<dbReference type="Proteomes" id="UP000001943">
    <property type="component" value="Chromosome"/>
</dbReference>
<dbReference type="GO" id="GO:0005829">
    <property type="term" value="C:cytosol"/>
    <property type="evidence" value="ECO:0007669"/>
    <property type="project" value="TreeGrafter"/>
</dbReference>
<dbReference type="GO" id="GO:0005524">
    <property type="term" value="F:ATP binding"/>
    <property type="evidence" value="ECO:0007669"/>
    <property type="project" value="UniProtKB-UniRule"/>
</dbReference>
<dbReference type="GO" id="GO:0004817">
    <property type="term" value="F:cysteine-tRNA ligase activity"/>
    <property type="evidence" value="ECO:0007669"/>
    <property type="project" value="UniProtKB-UniRule"/>
</dbReference>
<dbReference type="GO" id="GO:0008270">
    <property type="term" value="F:zinc ion binding"/>
    <property type="evidence" value="ECO:0007669"/>
    <property type="project" value="UniProtKB-UniRule"/>
</dbReference>
<dbReference type="GO" id="GO:0006423">
    <property type="term" value="P:cysteinyl-tRNA aminoacylation"/>
    <property type="evidence" value="ECO:0007669"/>
    <property type="project" value="UniProtKB-UniRule"/>
</dbReference>
<dbReference type="CDD" id="cd00672">
    <property type="entry name" value="CysRS_core"/>
    <property type="match status" value="1"/>
</dbReference>
<dbReference type="Gene3D" id="1.20.120.1910">
    <property type="entry name" value="Cysteine-tRNA ligase, C-terminal anti-codon recognition domain"/>
    <property type="match status" value="1"/>
</dbReference>
<dbReference type="Gene3D" id="3.40.50.620">
    <property type="entry name" value="HUPs"/>
    <property type="match status" value="1"/>
</dbReference>
<dbReference type="HAMAP" id="MF_00041">
    <property type="entry name" value="Cys_tRNA_synth"/>
    <property type="match status" value="1"/>
</dbReference>
<dbReference type="InterPro" id="IPR015803">
    <property type="entry name" value="Cys-tRNA-ligase"/>
</dbReference>
<dbReference type="InterPro" id="IPR015273">
    <property type="entry name" value="Cys-tRNA-synt_Ia_DALR"/>
</dbReference>
<dbReference type="InterPro" id="IPR024909">
    <property type="entry name" value="Cys-tRNA/MSH_ligase"/>
</dbReference>
<dbReference type="InterPro" id="IPR056411">
    <property type="entry name" value="CysS_C"/>
</dbReference>
<dbReference type="InterPro" id="IPR014729">
    <property type="entry name" value="Rossmann-like_a/b/a_fold"/>
</dbReference>
<dbReference type="InterPro" id="IPR032678">
    <property type="entry name" value="tRNA-synt_1_cat_dom"/>
</dbReference>
<dbReference type="InterPro" id="IPR009080">
    <property type="entry name" value="tRNAsynth_Ia_anticodon-bd"/>
</dbReference>
<dbReference type="NCBIfam" id="TIGR00435">
    <property type="entry name" value="cysS"/>
    <property type="match status" value="1"/>
</dbReference>
<dbReference type="PANTHER" id="PTHR10890:SF3">
    <property type="entry name" value="CYSTEINE--TRNA LIGASE, CYTOPLASMIC"/>
    <property type="match status" value="1"/>
</dbReference>
<dbReference type="PANTHER" id="PTHR10890">
    <property type="entry name" value="CYSTEINYL-TRNA SYNTHETASE"/>
    <property type="match status" value="1"/>
</dbReference>
<dbReference type="Pfam" id="PF23493">
    <property type="entry name" value="CysS_C"/>
    <property type="match status" value="1"/>
</dbReference>
<dbReference type="Pfam" id="PF09190">
    <property type="entry name" value="DALR_2"/>
    <property type="match status" value="1"/>
</dbReference>
<dbReference type="Pfam" id="PF01406">
    <property type="entry name" value="tRNA-synt_1e"/>
    <property type="match status" value="1"/>
</dbReference>
<dbReference type="PRINTS" id="PR00983">
    <property type="entry name" value="TRNASYNTHCYS"/>
</dbReference>
<dbReference type="SMART" id="SM00840">
    <property type="entry name" value="DALR_2"/>
    <property type="match status" value="1"/>
</dbReference>
<dbReference type="SUPFAM" id="SSF47323">
    <property type="entry name" value="Anticodon-binding domain of a subclass of class I aminoacyl-tRNA synthetases"/>
    <property type="match status" value="1"/>
</dbReference>
<dbReference type="SUPFAM" id="SSF52374">
    <property type="entry name" value="Nucleotidylyl transferase"/>
    <property type="match status" value="1"/>
</dbReference>
<name>SYC_ANAPZ</name>
<organism>
    <name type="scientific">Anaplasma phagocytophilum (strain HZ)</name>
    <dbReference type="NCBI Taxonomy" id="212042"/>
    <lineage>
        <taxon>Bacteria</taxon>
        <taxon>Pseudomonadati</taxon>
        <taxon>Pseudomonadota</taxon>
        <taxon>Alphaproteobacteria</taxon>
        <taxon>Rickettsiales</taxon>
        <taxon>Anaplasmataceae</taxon>
        <taxon>Anaplasma</taxon>
        <taxon>phagocytophilum group</taxon>
    </lineage>
</organism>
<feature type="chain" id="PRO_0000240888" description="Cysteine--tRNA ligase">
    <location>
        <begin position="1"/>
        <end position="462"/>
    </location>
</feature>
<feature type="short sequence motif" description="'HIGH' region">
    <location>
        <begin position="29"/>
        <end position="39"/>
    </location>
</feature>
<feature type="short sequence motif" description="'KMSKS' region">
    <location>
        <begin position="270"/>
        <end position="274"/>
    </location>
</feature>
<feature type="binding site" evidence="1">
    <location>
        <position position="27"/>
    </location>
    <ligand>
        <name>Zn(2+)</name>
        <dbReference type="ChEBI" id="CHEBI:29105"/>
    </ligand>
</feature>
<feature type="binding site" evidence="1">
    <location>
        <position position="211"/>
    </location>
    <ligand>
        <name>Zn(2+)</name>
        <dbReference type="ChEBI" id="CHEBI:29105"/>
    </ligand>
</feature>
<feature type="binding site" evidence="1">
    <location>
        <position position="236"/>
    </location>
    <ligand>
        <name>Zn(2+)</name>
        <dbReference type="ChEBI" id="CHEBI:29105"/>
    </ligand>
</feature>
<feature type="binding site" evidence="1">
    <location>
        <position position="240"/>
    </location>
    <ligand>
        <name>Zn(2+)</name>
        <dbReference type="ChEBI" id="CHEBI:29105"/>
    </ligand>
</feature>
<feature type="binding site" evidence="1">
    <location>
        <position position="273"/>
    </location>
    <ligand>
        <name>ATP</name>
        <dbReference type="ChEBI" id="CHEBI:30616"/>
    </ligand>
</feature>
<gene>
    <name evidence="1" type="primary">cysS</name>
    <name type="ordered locus">APH_0555</name>
</gene>
<sequence length="462" mass="51808">MKLYDTFSAAKRVFDPIDSACVKIYACGPTVYDLAHIGNARSAVVYDVLFRLLRELYPEVIYVRNITDVDDKIINAAAETGQNIGDFTERYIRYFHEDMDALNCLSPTVEPRATAEIDTMLQLISRLVESGHAYVKGGSVYFSISSHRHYGRLSGRKIDEMISGNRVSIDAEKLHPGDFVLWKPATEQDIKLGAAWESPWGGGRPGWHIECSAMSYRYLGESFDIHGGGADLMFPHHENELAQNMCAFSGSEYARYWVHNGFLTVNAGEKMSKSLGNVITVRGLRNSGIEGAVIRYVFLCTHYRKPLDWNEKAIFDAQSALSKMRRSCEEFTSEELNSDIEAVGVHNMLLEALKDDMNTPMAIAALHALVGEINKTTDFKERLKLARVLNRSAKLMGITDGFAGKSAEEAVDVDKIQELLERRREARNGGNYSLADEIRDQLHSMGIVIKDDKDGVTRWSRA</sequence>
<reference key="1">
    <citation type="journal article" date="2006" name="PLoS Genet.">
        <title>Comparative genomics of emerging human ehrlichiosis agents.</title>
        <authorList>
            <person name="Dunning Hotopp J.C."/>
            <person name="Lin M."/>
            <person name="Madupu R."/>
            <person name="Crabtree J."/>
            <person name="Angiuoli S.V."/>
            <person name="Eisen J.A."/>
            <person name="Seshadri R."/>
            <person name="Ren Q."/>
            <person name="Wu M."/>
            <person name="Utterback T.R."/>
            <person name="Smith S."/>
            <person name="Lewis M."/>
            <person name="Khouri H."/>
            <person name="Zhang C."/>
            <person name="Niu H."/>
            <person name="Lin Q."/>
            <person name="Ohashi N."/>
            <person name="Zhi N."/>
            <person name="Nelson W.C."/>
            <person name="Brinkac L.M."/>
            <person name="Dodson R.J."/>
            <person name="Rosovitz M.J."/>
            <person name="Sundaram J.P."/>
            <person name="Daugherty S.C."/>
            <person name="Davidsen T."/>
            <person name="Durkin A.S."/>
            <person name="Gwinn M.L."/>
            <person name="Haft D.H."/>
            <person name="Selengut J.D."/>
            <person name="Sullivan S.A."/>
            <person name="Zafar N."/>
            <person name="Zhou L."/>
            <person name="Benahmed F."/>
            <person name="Forberger H."/>
            <person name="Halpin R."/>
            <person name="Mulligan S."/>
            <person name="Robinson J."/>
            <person name="White O."/>
            <person name="Rikihisa Y."/>
            <person name="Tettelin H."/>
        </authorList>
    </citation>
    <scope>NUCLEOTIDE SEQUENCE [LARGE SCALE GENOMIC DNA]</scope>
    <source>
        <strain>HZ</strain>
    </source>
</reference>